<accession>Q6AL30</accession>
<name>RLMH_DESPS</name>
<reference key="1">
    <citation type="journal article" date="2004" name="Environ. Microbiol.">
        <title>The genome of Desulfotalea psychrophila, a sulfate-reducing bacterium from permanently cold Arctic sediments.</title>
        <authorList>
            <person name="Rabus R."/>
            <person name="Ruepp A."/>
            <person name="Frickey T."/>
            <person name="Rattei T."/>
            <person name="Fartmann B."/>
            <person name="Stark M."/>
            <person name="Bauer M."/>
            <person name="Zibat A."/>
            <person name="Lombardot T."/>
            <person name="Becker I."/>
            <person name="Amann J."/>
            <person name="Gellner K."/>
            <person name="Teeling H."/>
            <person name="Leuschner W.D."/>
            <person name="Gloeckner F.-O."/>
            <person name="Lupas A.N."/>
            <person name="Amann R."/>
            <person name="Klenk H.-P."/>
        </authorList>
    </citation>
    <scope>NUCLEOTIDE SEQUENCE [LARGE SCALE GENOMIC DNA]</scope>
    <source>
        <strain>DSM 12343 / LSv54</strain>
    </source>
</reference>
<keyword id="KW-0963">Cytoplasm</keyword>
<keyword id="KW-0489">Methyltransferase</keyword>
<keyword id="KW-1185">Reference proteome</keyword>
<keyword id="KW-0698">rRNA processing</keyword>
<keyword id="KW-0949">S-adenosyl-L-methionine</keyword>
<keyword id="KW-0808">Transferase</keyword>
<organism>
    <name type="scientific">Desulfotalea psychrophila (strain LSv54 / DSM 12343)</name>
    <dbReference type="NCBI Taxonomy" id="177439"/>
    <lineage>
        <taxon>Bacteria</taxon>
        <taxon>Pseudomonadati</taxon>
        <taxon>Thermodesulfobacteriota</taxon>
        <taxon>Desulfobulbia</taxon>
        <taxon>Desulfobulbales</taxon>
        <taxon>Desulfocapsaceae</taxon>
        <taxon>Desulfotalea</taxon>
    </lineage>
</organism>
<dbReference type="EC" id="2.1.1.177" evidence="1"/>
<dbReference type="EMBL" id="CR522870">
    <property type="protein sequence ID" value="CAG36945.1"/>
    <property type="molecule type" value="Genomic_DNA"/>
</dbReference>
<dbReference type="RefSeq" id="WP_011189457.1">
    <property type="nucleotide sequence ID" value="NC_006138.1"/>
</dbReference>
<dbReference type="SMR" id="Q6AL30"/>
<dbReference type="STRING" id="177439.DP2216"/>
<dbReference type="KEGG" id="dps:DP2216"/>
<dbReference type="eggNOG" id="COG1576">
    <property type="taxonomic scope" value="Bacteria"/>
</dbReference>
<dbReference type="HOGENOM" id="CLU_100552_0_0_7"/>
<dbReference type="OrthoDB" id="9806643at2"/>
<dbReference type="Proteomes" id="UP000000602">
    <property type="component" value="Chromosome"/>
</dbReference>
<dbReference type="GO" id="GO:0005737">
    <property type="term" value="C:cytoplasm"/>
    <property type="evidence" value="ECO:0007669"/>
    <property type="project" value="UniProtKB-SubCell"/>
</dbReference>
<dbReference type="GO" id="GO:0070038">
    <property type="term" value="F:rRNA (pseudouridine-N3-)-methyltransferase activity"/>
    <property type="evidence" value="ECO:0007669"/>
    <property type="project" value="UniProtKB-UniRule"/>
</dbReference>
<dbReference type="CDD" id="cd18081">
    <property type="entry name" value="RlmH-like"/>
    <property type="match status" value="1"/>
</dbReference>
<dbReference type="Gene3D" id="3.40.1280.10">
    <property type="match status" value="1"/>
</dbReference>
<dbReference type="HAMAP" id="MF_00658">
    <property type="entry name" value="23SrRNA_methyltr_H"/>
    <property type="match status" value="1"/>
</dbReference>
<dbReference type="InterPro" id="IPR029028">
    <property type="entry name" value="Alpha/beta_knot_MTases"/>
</dbReference>
<dbReference type="InterPro" id="IPR003742">
    <property type="entry name" value="RlmH-like"/>
</dbReference>
<dbReference type="InterPro" id="IPR029026">
    <property type="entry name" value="tRNA_m1G_MTases_N"/>
</dbReference>
<dbReference type="PANTHER" id="PTHR33603">
    <property type="entry name" value="METHYLTRANSFERASE"/>
    <property type="match status" value="1"/>
</dbReference>
<dbReference type="PANTHER" id="PTHR33603:SF1">
    <property type="entry name" value="RIBOSOMAL RNA LARGE SUBUNIT METHYLTRANSFERASE H"/>
    <property type="match status" value="1"/>
</dbReference>
<dbReference type="Pfam" id="PF02590">
    <property type="entry name" value="SPOUT_MTase"/>
    <property type="match status" value="1"/>
</dbReference>
<dbReference type="PIRSF" id="PIRSF004505">
    <property type="entry name" value="MT_bac"/>
    <property type="match status" value="1"/>
</dbReference>
<dbReference type="SUPFAM" id="SSF75217">
    <property type="entry name" value="alpha/beta knot"/>
    <property type="match status" value="1"/>
</dbReference>
<sequence length="153" mass="17137">MKHEILLLGKIKDSFIAEGVEEYLKRLQHYTKVELRYLKGKGKKGALLSTEQEGELLLANVPANAFVVALDVQGKNLSSEGLAEQVINWENTGTRSVCYLIGGPLGLSPSLLARADLRLSFSKMTFTHDMVRLLLVEQLYRAYTIKAGEKYHK</sequence>
<gene>
    <name evidence="1" type="primary">rlmH</name>
    <name type="ordered locus">DP2216</name>
</gene>
<protein>
    <recommendedName>
        <fullName evidence="1">Ribosomal RNA large subunit methyltransferase H</fullName>
        <ecNumber evidence="1">2.1.1.177</ecNumber>
    </recommendedName>
    <alternativeName>
        <fullName evidence="1">23S rRNA (pseudouridine1915-N3)-methyltransferase</fullName>
    </alternativeName>
    <alternativeName>
        <fullName evidence="1">23S rRNA m3Psi1915 methyltransferase</fullName>
    </alternativeName>
    <alternativeName>
        <fullName evidence="1">rRNA (pseudouridine-N3-)-methyltransferase RlmH</fullName>
    </alternativeName>
</protein>
<proteinExistence type="inferred from homology"/>
<feature type="chain" id="PRO_0000198112" description="Ribosomal RNA large subunit methyltransferase H">
    <location>
        <begin position="1"/>
        <end position="153"/>
    </location>
</feature>
<feature type="binding site" evidence="1">
    <location>
        <position position="70"/>
    </location>
    <ligand>
        <name>S-adenosyl-L-methionine</name>
        <dbReference type="ChEBI" id="CHEBI:59789"/>
    </ligand>
</feature>
<feature type="binding site" evidence="1">
    <location>
        <position position="102"/>
    </location>
    <ligand>
        <name>S-adenosyl-L-methionine</name>
        <dbReference type="ChEBI" id="CHEBI:59789"/>
    </ligand>
</feature>
<feature type="binding site" evidence="1">
    <location>
        <begin position="121"/>
        <end position="126"/>
    </location>
    <ligand>
        <name>S-adenosyl-L-methionine</name>
        <dbReference type="ChEBI" id="CHEBI:59789"/>
    </ligand>
</feature>
<evidence type="ECO:0000255" key="1">
    <source>
        <dbReference type="HAMAP-Rule" id="MF_00658"/>
    </source>
</evidence>
<comment type="function">
    <text evidence="1">Specifically methylates the pseudouridine at position 1915 (m3Psi1915) in 23S rRNA.</text>
</comment>
<comment type="catalytic activity">
    <reaction evidence="1">
        <text>pseudouridine(1915) in 23S rRNA + S-adenosyl-L-methionine = N(3)-methylpseudouridine(1915) in 23S rRNA + S-adenosyl-L-homocysteine + H(+)</text>
        <dbReference type="Rhea" id="RHEA:42752"/>
        <dbReference type="Rhea" id="RHEA-COMP:10221"/>
        <dbReference type="Rhea" id="RHEA-COMP:10222"/>
        <dbReference type="ChEBI" id="CHEBI:15378"/>
        <dbReference type="ChEBI" id="CHEBI:57856"/>
        <dbReference type="ChEBI" id="CHEBI:59789"/>
        <dbReference type="ChEBI" id="CHEBI:65314"/>
        <dbReference type="ChEBI" id="CHEBI:74486"/>
        <dbReference type="EC" id="2.1.1.177"/>
    </reaction>
</comment>
<comment type="subunit">
    <text evidence="1">Homodimer.</text>
</comment>
<comment type="subcellular location">
    <subcellularLocation>
        <location evidence="1">Cytoplasm</location>
    </subcellularLocation>
</comment>
<comment type="similarity">
    <text evidence="1">Belongs to the RNA methyltransferase RlmH family.</text>
</comment>